<feature type="chain" id="PRO_1000145280" description="ATP synthase subunit a">
    <location>
        <begin position="1"/>
        <end position="226"/>
    </location>
</feature>
<feature type="transmembrane region" description="Helical" evidence="1">
    <location>
        <begin position="18"/>
        <end position="38"/>
    </location>
</feature>
<feature type="transmembrane region" description="Helical" evidence="1">
    <location>
        <begin position="79"/>
        <end position="99"/>
    </location>
</feature>
<feature type="transmembrane region" description="Helical" evidence="1">
    <location>
        <begin position="105"/>
        <end position="125"/>
    </location>
</feature>
<feature type="transmembrane region" description="Helical" evidence="1">
    <location>
        <begin position="134"/>
        <end position="154"/>
    </location>
</feature>
<feature type="transmembrane region" description="Helical" evidence="1">
    <location>
        <begin position="179"/>
        <end position="199"/>
    </location>
</feature>
<feature type="transmembrane region" description="Helical" evidence="1">
    <location>
        <begin position="201"/>
        <end position="221"/>
    </location>
</feature>
<evidence type="ECO:0000255" key="1">
    <source>
        <dbReference type="HAMAP-Rule" id="MF_01393"/>
    </source>
</evidence>
<name>ATP6_HELPG</name>
<protein>
    <recommendedName>
        <fullName evidence="1">ATP synthase subunit a</fullName>
    </recommendedName>
    <alternativeName>
        <fullName evidence="1">ATP synthase F0 sector subunit a</fullName>
    </alternativeName>
    <alternativeName>
        <fullName evidence="1">F-ATPase subunit 6</fullName>
    </alternativeName>
</protein>
<sequence length="226" mass="25615">MEHRVFTIANFFSSNHDFITGFFVVLTAVLMFLISLGASRKMQMVPMGLQNVYESIISAILSVAKDIIGEELARKYFPLAGTIALYVFFSNMIGIIPGFESPTASWSFTLVLALIVFFYYHFEGIRVQGFFKYFAHFAGPVKWLAPFMFPIEIISHFSRIVSLSFRLFGNIKGDDMFLLIMLLLVPWAVPVAPFMVLFFMGILQAFVFMILTYVYLAGAVLTDEGH</sequence>
<comment type="function">
    <text evidence="1">Key component of the proton channel; it plays a direct role in the translocation of protons across the membrane.</text>
</comment>
<comment type="subunit">
    <text evidence="1">F-type ATPases have 2 components, CF(1) - the catalytic core - and CF(0) - the membrane proton channel. CF(1) has five subunits: alpha(3), beta(3), gamma(1), delta(1), epsilon(1). CF(0) has three main subunits: a(1), b(2) and c(9-12). The alpha and beta chains form an alternating ring which encloses part of the gamma chain. CF(1) is attached to CF(0) by a central stalk formed by the gamma and epsilon chains, while a peripheral stalk is formed by the delta and b chains.</text>
</comment>
<comment type="subcellular location">
    <subcellularLocation>
        <location evidence="1">Cell inner membrane</location>
        <topology evidence="1">Multi-pass membrane protein</topology>
    </subcellularLocation>
</comment>
<comment type="similarity">
    <text evidence="1">Belongs to the ATPase A chain family.</text>
</comment>
<keyword id="KW-0066">ATP synthesis</keyword>
<keyword id="KW-0997">Cell inner membrane</keyword>
<keyword id="KW-1003">Cell membrane</keyword>
<keyword id="KW-0138">CF(0)</keyword>
<keyword id="KW-0375">Hydrogen ion transport</keyword>
<keyword id="KW-0406">Ion transport</keyword>
<keyword id="KW-0472">Membrane</keyword>
<keyword id="KW-1185">Reference proteome</keyword>
<keyword id="KW-0812">Transmembrane</keyword>
<keyword id="KW-1133">Transmembrane helix</keyword>
<keyword id="KW-0813">Transport</keyword>
<reference key="1">
    <citation type="journal article" date="2009" name="J. Bacteriol.">
        <title>The complete genome sequence of Helicobacter pylori strain G27.</title>
        <authorList>
            <person name="Baltrus D.A."/>
            <person name="Amieva M.R."/>
            <person name="Covacci A."/>
            <person name="Lowe T.M."/>
            <person name="Merrell D.S."/>
            <person name="Ottemann K.M."/>
            <person name="Stein M."/>
            <person name="Salama N.R."/>
            <person name="Guillemin K."/>
        </authorList>
    </citation>
    <scope>NUCLEOTIDE SEQUENCE [LARGE SCALE GENOMIC DNA]</scope>
    <source>
        <strain>G27</strain>
    </source>
</reference>
<gene>
    <name evidence="1" type="primary">atpB</name>
    <name type="ordered locus">HPG27_787</name>
</gene>
<proteinExistence type="inferred from homology"/>
<organism>
    <name type="scientific">Helicobacter pylori (strain G27)</name>
    <dbReference type="NCBI Taxonomy" id="563041"/>
    <lineage>
        <taxon>Bacteria</taxon>
        <taxon>Pseudomonadati</taxon>
        <taxon>Campylobacterota</taxon>
        <taxon>Epsilonproteobacteria</taxon>
        <taxon>Campylobacterales</taxon>
        <taxon>Helicobacteraceae</taxon>
        <taxon>Helicobacter</taxon>
    </lineage>
</organism>
<dbReference type="EMBL" id="CP001173">
    <property type="protein sequence ID" value="ACI27542.1"/>
    <property type="molecule type" value="Genomic_DNA"/>
</dbReference>
<dbReference type="RefSeq" id="WP_000401225.1">
    <property type="nucleotide sequence ID" value="NC_011333.1"/>
</dbReference>
<dbReference type="SMR" id="B5Z7J3"/>
<dbReference type="KEGG" id="hpg:HPG27_787"/>
<dbReference type="HOGENOM" id="CLU_041018_2_2_7"/>
<dbReference type="Proteomes" id="UP000001735">
    <property type="component" value="Chromosome"/>
</dbReference>
<dbReference type="GO" id="GO:0005886">
    <property type="term" value="C:plasma membrane"/>
    <property type="evidence" value="ECO:0007669"/>
    <property type="project" value="UniProtKB-SubCell"/>
</dbReference>
<dbReference type="GO" id="GO:0045259">
    <property type="term" value="C:proton-transporting ATP synthase complex"/>
    <property type="evidence" value="ECO:0007669"/>
    <property type="project" value="UniProtKB-KW"/>
</dbReference>
<dbReference type="GO" id="GO:0046933">
    <property type="term" value="F:proton-transporting ATP synthase activity, rotational mechanism"/>
    <property type="evidence" value="ECO:0007669"/>
    <property type="project" value="UniProtKB-UniRule"/>
</dbReference>
<dbReference type="GO" id="GO:0042777">
    <property type="term" value="P:proton motive force-driven plasma membrane ATP synthesis"/>
    <property type="evidence" value="ECO:0007669"/>
    <property type="project" value="TreeGrafter"/>
</dbReference>
<dbReference type="CDD" id="cd00310">
    <property type="entry name" value="ATP-synt_Fo_a_6"/>
    <property type="match status" value="1"/>
</dbReference>
<dbReference type="FunFam" id="1.20.120.220:FF:000006">
    <property type="entry name" value="ATP synthase subunit a"/>
    <property type="match status" value="1"/>
</dbReference>
<dbReference type="Gene3D" id="1.20.120.220">
    <property type="entry name" value="ATP synthase, F0 complex, subunit A"/>
    <property type="match status" value="1"/>
</dbReference>
<dbReference type="HAMAP" id="MF_01393">
    <property type="entry name" value="ATP_synth_a_bact"/>
    <property type="match status" value="1"/>
</dbReference>
<dbReference type="InterPro" id="IPR045082">
    <property type="entry name" value="ATP_syn_F0_a_bact/chloroplast"/>
</dbReference>
<dbReference type="InterPro" id="IPR000568">
    <property type="entry name" value="ATP_synth_F0_asu"/>
</dbReference>
<dbReference type="InterPro" id="IPR023011">
    <property type="entry name" value="ATP_synth_F0_asu_AS"/>
</dbReference>
<dbReference type="InterPro" id="IPR035908">
    <property type="entry name" value="F0_ATP_A_sf"/>
</dbReference>
<dbReference type="NCBIfam" id="TIGR01131">
    <property type="entry name" value="ATP_synt_6_or_A"/>
    <property type="match status" value="1"/>
</dbReference>
<dbReference type="NCBIfam" id="NF004481">
    <property type="entry name" value="PRK05815.2-3"/>
    <property type="match status" value="1"/>
</dbReference>
<dbReference type="PANTHER" id="PTHR42823">
    <property type="entry name" value="ATP SYNTHASE SUBUNIT A, CHLOROPLASTIC"/>
    <property type="match status" value="1"/>
</dbReference>
<dbReference type="PANTHER" id="PTHR42823:SF3">
    <property type="entry name" value="ATP SYNTHASE SUBUNIT A, CHLOROPLASTIC"/>
    <property type="match status" value="1"/>
</dbReference>
<dbReference type="Pfam" id="PF00119">
    <property type="entry name" value="ATP-synt_A"/>
    <property type="match status" value="1"/>
</dbReference>
<dbReference type="PRINTS" id="PR00123">
    <property type="entry name" value="ATPASEA"/>
</dbReference>
<dbReference type="SUPFAM" id="SSF81336">
    <property type="entry name" value="F1F0 ATP synthase subunit A"/>
    <property type="match status" value="1"/>
</dbReference>
<dbReference type="PROSITE" id="PS00449">
    <property type="entry name" value="ATPASE_A"/>
    <property type="match status" value="1"/>
</dbReference>
<accession>B5Z7J3</accession>